<accession>Q2S6C2</accession>
<evidence type="ECO:0000255" key="1">
    <source>
        <dbReference type="HAMAP-Rule" id="MF_00188"/>
    </source>
</evidence>
<feature type="chain" id="PRO_1000077478" description="Protease HtpX homolog">
    <location>
        <begin position="1"/>
        <end position="276"/>
    </location>
</feature>
<feature type="transmembrane region" description="Helical" evidence="1">
    <location>
        <begin position="14"/>
        <end position="34"/>
    </location>
</feature>
<feature type="transmembrane region" description="Helical" evidence="1">
    <location>
        <begin position="145"/>
        <end position="165"/>
    </location>
</feature>
<feature type="transmembrane region" description="Helical" evidence="1">
    <location>
        <begin position="171"/>
        <end position="191"/>
    </location>
</feature>
<feature type="active site" evidence="1">
    <location>
        <position position="131"/>
    </location>
</feature>
<feature type="binding site" evidence="1">
    <location>
        <position position="130"/>
    </location>
    <ligand>
        <name>Zn(2+)</name>
        <dbReference type="ChEBI" id="CHEBI:29105"/>
        <note>catalytic</note>
    </ligand>
</feature>
<feature type="binding site" evidence="1">
    <location>
        <position position="134"/>
    </location>
    <ligand>
        <name>Zn(2+)</name>
        <dbReference type="ChEBI" id="CHEBI:29105"/>
        <note>catalytic</note>
    </ligand>
</feature>
<feature type="binding site" evidence="1">
    <location>
        <position position="196"/>
    </location>
    <ligand>
        <name>Zn(2+)</name>
        <dbReference type="ChEBI" id="CHEBI:29105"/>
        <note>catalytic</note>
    </ligand>
</feature>
<comment type="cofactor">
    <cofactor evidence="1">
        <name>Zn(2+)</name>
        <dbReference type="ChEBI" id="CHEBI:29105"/>
    </cofactor>
    <text evidence="1">Binds 1 zinc ion per subunit.</text>
</comment>
<comment type="subcellular location">
    <subcellularLocation>
        <location evidence="1">Cell inner membrane</location>
        <topology evidence="1">Multi-pass membrane protein</topology>
    </subcellularLocation>
</comment>
<comment type="similarity">
    <text evidence="1">Belongs to the peptidase M48B family.</text>
</comment>
<reference key="1">
    <citation type="journal article" date="2005" name="Proc. Natl. Acad. Sci. U.S.A.">
        <title>The genome of Salinibacter ruber: convergence and gene exchange among hyperhalophilic bacteria and archaea.</title>
        <authorList>
            <person name="Mongodin E.F."/>
            <person name="Nelson K.E."/>
            <person name="Daugherty S."/>
            <person name="DeBoy R.T."/>
            <person name="Wister J."/>
            <person name="Khouri H."/>
            <person name="Weidman J."/>
            <person name="Walsh D.A."/>
            <person name="Papke R.T."/>
            <person name="Sanchez Perez G."/>
            <person name="Sharma A.K."/>
            <person name="Nesbo C.L."/>
            <person name="MacLeod D."/>
            <person name="Bapteste E."/>
            <person name="Doolittle W.F."/>
            <person name="Charlebois R.L."/>
            <person name="Legault B."/>
            <person name="Rodriguez-Valera F."/>
        </authorList>
    </citation>
    <scope>NUCLEOTIDE SEQUENCE [LARGE SCALE GENOMIC DNA]</scope>
    <source>
        <strain>DSM 13855 / CECT 5946 / M31</strain>
    </source>
</reference>
<proteinExistence type="inferred from homology"/>
<dbReference type="EC" id="3.4.24.-" evidence="1"/>
<dbReference type="EMBL" id="CP000159">
    <property type="protein sequence ID" value="ABC45604.1"/>
    <property type="molecule type" value="Genomic_DNA"/>
</dbReference>
<dbReference type="RefSeq" id="WP_011402892.1">
    <property type="nucleotide sequence ID" value="NC_007677.1"/>
</dbReference>
<dbReference type="RefSeq" id="YP_444259.1">
    <property type="nucleotide sequence ID" value="NC_007677.1"/>
</dbReference>
<dbReference type="STRING" id="309807.SRU_0106"/>
<dbReference type="EnsemblBacteria" id="ABC45604">
    <property type="protein sequence ID" value="ABC45604"/>
    <property type="gene ID" value="SRU_0106"/>
</dbReference>
<dbReference type="KEGG" id="sru:SRU_0106"/>
<dbReference type="PATRIC" id="fig|309807.25.peg.116"/>
<dbReference type="eggNOG" id="COG0501">
    <property type="taxonomic scope" value="Bacteria"/>
</dbReference>
<dbReference type="HOGENOM" id="CLU_042266_3_0_10"/>
<dbReference type="OrthoDB" id="9810445at2"/>
<dbReference type="Proteomes" id="UP000008674">
    <property type="component" value="Chromosome"/>
</dbReference>
<dbReference type="GO" id="GO:0005886">
    <property type="term" value="C:plasma membrane"/>
    <property type="evidence" value="ECO:0007669"/>
    <property type="project" value="UniProtKB-SubCell"/>
</dbReference>
<dbReference type="GO" id="GO:0004222">
    <property type="term" value="F:metalloendopeptidase activity"/>
    <property type="evidence" value="ECO:0007669"/>
    <property type="project" value="UniProtKB-UniRule"/>
</dbReference>
<dbReference type="GO" id="GO:0008270">
    <property type="term" value="F:zinc ion binding"/>
    <property type="evidence" value="ECO:0007669"/>
    <property type="project" value="UniProtKB-UniRule"/>
</dbReference>
<dbReference type="GO" id="GO:0006508">
    <property type="term" value="P:proteolysis"/>
    <property type="evidence" value="ECO:0007669"/>
    <property type="project" value="UniProtKB-KW"/>
</dbReference>
<dbReference type="CDD" id="cd07336">
    <property type="entry name" value="M48B_HtpX_like"/>
    <property type="match status" value="1"/>
</dbReference>
<dbReference type="Gene3D" id="3.30.2010.10">
    <property type="entry name" value="Metalloproteases ('zincins'), catalytic domain"/>
    <property type="match status" value="1"/>
</dbReference>
<dbReference type="HAMAP" id="MF_00188">
    <property type="entry name" value="Pept_M48_protease_HtpX"/>
    <property type="match status" value="1"/>
</dbReference>
<dbReference type="InterPro" id="IPR050083">
    <property type="entry name" value="HtpX_protease"/>
</dbReference>
<dbReference type="InterPro" id="IPR022919">
    <property type="entry name" value="Pept_M48_protease_HtpX"/>
</dbReference>
<dbReference type="InterPro" id="IPR001915">
    <property type="entry name" value="Peptidase_M48"/>
</dbReference>
<dbReference type="NCBIfam" id="NF002826">
    <property type="entry name" value="PRK03001.1"/>
    <property type="match status" value="1"/>
</dbReference>
<dbReference type="PANTHER" id="PTHR43221">
    <property type="entry name" value="PROTEASE HTPX"/>
    <property type="match status" value="1"/>
</dbReference>
<dbReference type="PANTHER" id="PTHR43221:SF1">
    <property type="entry name" value="PROTEASE HTPX"/>
    <property type="match status" value="1"/>
</dbReference>
<dbReference type="Pfam" id="PF01435">
    <property type="entry name" value="Peptidase_M48"/>
    <property type="match status" value="1"/>
</dbReference>
<gene>
    <name evidence="1" type="primary">htpX</name>
    <name type="ordered locus">SRU_0106</name>
</gene>
<protein>
    <recommendedName>
        <fullName evidence="1">Protease HtpX homolog</fullName>
        <ecNumber evidence="1">3.4.24.-</ecNumber>
    </recommendedName>
</protein>
<keyword id="KW-0997">Cell inner membrane</keyword>
<keyword id="KW-1003">Cell membrane</keyword>
<keyword id="KW-0378">Hydrolase</keyword>
<keyword id="KW-0472">Membrane</keyword>
<keyword id="KW-0479">Metal-binding</keyword>
<keyword id="KW-0482">Metalloprotease</keyword>
<keyword id="KW-0645">Protease</keyword>
<keyword id="KW-1185">Reference proteome</keyword>
<keyword id="KW-0812">Transmembrane</keyword>
<keyword id="KW-1133">Transmembrane helix</keyword>
<keyword id="KW-0862">Zinc</keyword>
<organism>
    <name type="scientific">Salinibacter ruber (strain DSM 13855 / M31)</name>
    <dbReference type="NCBI Taxonomy" id="309807"/>
    <lineage>
        <taxon>Bacteria</taxon>
        <taxon>Pseudomonadati</taxon>
        <taxon>Rhodothermota</taxon>
        <taxon>Rhodothermia</taxon>
        <taxon>Rhodothermales</taxon>
        <taxon>Salinibacteraceae</taxon>
        <taxon>Salinibacter</taxon>
    </lineage>
</organism>
<sequence length="276" mass="29972">MNTFRTTALMAVMIVLFALIGQALGGTGGMLLAFLIAVGMNGVSYWYSSSIVLRMYGAEEVSRAEAPELHDLVDRLRRRADLPMPKVCIIPQDQPNAFATGRNPDNAVVAVTKGIMDVLDRDELAGVIAHELAHIKNRDMLTSTVAATLAGAITMLSRFALFFGGRDNNFLVSLLMMILAPMAAMLIQSAISRSREYAADREGAEIAKNPLGLASALRSMERAAEHRPMPANQTTSHMFIVNPFSGGLSGIKRLFSTHPPTEERIARLEEMAGRAQ</sequence>
<name>HTPX_SALRD</name>